<name>Y163_ARCFU</name>
<organism>
    <name type="scientific">Archaeoglobus fulgidus (strain ATCC 49558 / DSM 4304 / JCM 9628 / NBRC 100126 / VC-16)</name>
    <dbReference type="NCBI Taxonomy" id="224325"/>
    <lineage>
        <taxon>Archaea</taxon>
        <taxon>Methanobacteriati</taxon>
        <taxon>Methanobacteriota</taxon>
        <taxon>Archaeoglobi</taxon>
        <taxon>Archaeoglobales</taxon>
        <taxon>Archaeoglobaceae</taxon>
        <taxon>Archaeoglobus</taxon>
    </lineage>
</organism>
<sequence length="183" mass="20804">MNISPSPLTDTGKALLRLNLIAIALLWLYPLLTYSQLPETVPTHFGAGGEPDRFGSREELLILPAVFSIAPAIILIITKLRFTLINRYPQFINLPAFYMNIGKIREERRSYWVNRYFEPVLLLSLILSAGFLGMEYAIFHATLSGELPLLFYIILIFVIAAPLFIFFLYLSMISAQMSREIGE</sequence>
<reference key="1">
    <citation type="journal article" date="1997" name="Nature">
        <title>The complete genome sequence of the hyperthermophilic, sulphate-reducing archaeon Archaeoglobus fulgidus.</title>
        <authorList>
            <person name="Klenk H.-P."/>
            <person name="Clayton R.A."/>
            <person name="Tomb J.-F."/>
            <person name="White O."/>
            <person name="Nelson K.E."/>
            <person name="Ketchum K.A."/>
            <person name="Dodson R.J."/>
            <person name="Gwinn M.L."/>
            <person name="Hickey E.K."/>
            <person name="Peterson J.D."/>
            <person name="Richardson D.L."/>
            <person name="Kerlavage A.R."/>
            <person name="Graham D.E."/>
            <person name="Kyrpides N.C."/>
            <person name="Fleischmann R.D."/>
            <person name="Quackenbush J."/>
            <person name="Lee N.H."/>
            <person name="Sutton G.G."/>
            <person name="Gill S.R."/>
            <person name="Kirkness E.F."/>
            <person name="Dougherty B.A."/>
            <person name="McKenney K."/>
            <person name="Adams M.D."/>
            <person name="Loftus B.J."/>
            <person name="Peterson S.N."/>
            <person name="Reich C.I."/>
            <person name="McNeil L.K."/>
            <person name="Badger J.H."/>
            <person name="Glodek A."/>
            <person name="Zhou L."/>
            <person name="Overbeek R."/>
            <person name="Gocayne J.D."/>
            <person name="Weidman J.F."/>
            <person name="McDonald L.A."/>
            <person name="Utterback T.R."/>
            <person name="Cotton M.D."/>
            <person name="Spriggs T."/>
            <person name="Artiach P."/>
            <person name="Kaine B.P."/>
            <person name="Sykes S.M."/>
            <person name="Sadow P.W."/>
            <person name="D'Andrea K.P."/>
            <person name="Bowman C."/>
            <person name="Fujii C."/>
            <person name="Garland S.A."/>
            <person name="Mason T.M."/>
            <person name="Olsen G.J."/>
            <person name="Fraser C.M."/>
            <person name="Smith H.O."/>
            <person name="Woese C.R."/>
            <person name="Venter J.C."/>
        </authorList>
    </citation>
    <scope>NUCLEOTIDE SEQUENCE [LARGE SCALE GENOMIC DNA]</scope>
    <source>
        <strain>ATCC 49558 / DSM 4304 / JCM 9628 / NBRC 100126 / VC-16</strain>
    </source>
</reference>
<comment type="subcellular location">
    <subcellularLocation>
        <location evidence="2">Cell membrane</location>
        <topology evidence="2">Multi-pass membrane protein</topology>
    </subcellularLocation>
</comment>
<proteinExistence type="predicted"/>
<accession>O30074</accession>
<keyword id="KW-1003">Cell membrane</keyword>
<keyword id="KW-0472">Membrane</keyword>
<keyword id="KW-1185">Reference proteome</keyword>
<keyword id="KW-0812">Transmembrane</keyword>
<keyword id="KW-1133">Transmembrane helix</keyword>
<dbReference type="EMBL" id="AE000782">
    <property type="protein sequence ID" value="AAB91073.1"/>
    <property type="molecule type" value="Genomic_DNA"/>
</dbReference>
<dbReference type="PIR" id="C69270">
    <property type="entry name" value="C69270"/>
</dbReference>
<dbReference type="RefSeq" id="WP_010877675.1">
    <property type="nucleotide sequence ID" value="NC_000917.1"/>
</dbReference>
<dbReference type="SMR" id="O30074"/>
<dbReference type="STRING" id="224325.AF_0163"/>
<dbReference type="PaxDb" id="224325-AF_0163"/>
<dbReference type="EnsemblBacteria" id="AAB91073">
    <property type="protein sequence ID" value="AAB91073"/>
    <property type="gene ID" value="AF_0163"/>
</dbReference>
<dbReference type="KEGG" id="afu:AF_0163"/>
<dbReference type="eggNOG" id="arCOG06110">
    <property type="taxonomic scope" value="Archaea"/>
</dbReference>
<dbReference type="HOGENOM" id="CLU_1431577_0_0_2"/>
<dbReference type="OrthoDB" id="359439at2157"/>
<dbReference type="Proteomes" id="UP000002199">
    <property type="component" value="Chromosome"/>
</dbReference>
<dbReference type="GO" id="GO:0005886">
    <property type="term" value="C:plasma membrane"/>
    <property type="evidence" value="ECO:0007669"/>
    <property type="project" value="UniProtKB-SubCell"/>
</dbReference>
<dbReference type="InterPro" id="IPR012867">
    <property type="entry name" value="DUF1648"/>
</dbReference>
<dbReference type="Pfam" id="PF07853">
    <property type="entry name" value="DUF1648"/>
    <property type="match status" value="1"/>
</dbReference>
<protein>
    <recommendedName>
        <fullName>Uncharacterized protein AF_0163</fullName>
    </recommendedName>
</protein>
<gene>
    <name type="ordered locus">AF_0163</name>
</gene>
<evidence type="ECO:0000255" key="1"/>
<evidence type="ECO:0000305" key="2"/>
<feature type="chain" id="PRO_0000127844" description="Uncharacterized protein AF_0163">
    <location>
        <begin position="1"/>
        <end position="183"/>
    </location>
</feature>
<feature type="transmembrane region" description="Helical" evidence="1">
    <location>
        <begin position="13"/>
        <end position="35"/>
    </location>
</feature>
<feature type="transmembrane region" description="Helical" evidence="1">
    <location>
        <begin position="60"/>
        <end position="82"/>
    </location>
</feature>
<feature type="transmembrane region" description="Helical" evidence="1">
    <location>
        <begin position="117"/>
        <end position="139"/>
    </location>
</feature>
<feature type="transmembrane region" description="Helical" evidence="1">
    <location>
        <begin position="149"/>
        <end position="171"/>
    </location>
</feature>